<reference key="1">
    <citation type="submission" date="2008-02" db="EMBL/GenBank/DDBJ databases">
        <title>Complete sequence of Yersinia pseudotuberculosis YPIII.</title>
        <authorList>
            <consortium name="US DOE Joint Genome Institute"/>
            <person name="Copeland A."/>
            <person name="Lucas S."/>
            <person name="Lapidus A."/>
            <person name="Glavina del Rio T."/>
            <person name="Dalin E."/>
            <person name="Tice H."/>
            <person name="Bruce D."/>
            <person name="Goodwin L."/>
            <person name="Pitluck S."/>
            <person name="Munk A.C."/>
            <person name="Brettin T."/>
            <person name="Detter J.C."/>
            <person name="Han C."/>
            <person name="Tapia R."/>
            <person name="Schmutz J."/>
            <person name="Larimer F."/>
            <person name="Land M."/>
            <person name="Hauser L."/>
            <person name="Challacombe J.F."/>
            <person name="Green L."/>
            <person name="Lindler L.E."/>
            <person name="Nikolich M.P."/>
            <person name="Richardson P."/>
        </authorList>
    </citation>
    <scope>NUCLEOTIDE SEQUENCE [LARGE SCALE GENOMIC DNA]</scope>
    <source>
        <strain>YPIII</strain>
    </source>
</reference>
<gene>
    <name evidence="1" type="primary">speD</name>
    <name type="ordered locus">YPK_3483</name>
</gene>
<feature type="chain" id="PRO_0000364431" description="S-adenosylmethionine decarboxylase beta chain" evidence="1">
    <location>
        <begin position="1"/>
        <end position="111"/>
    </location>
</feature>
<feature type="chain" id="PRO_0000364432" description="S-adenosylmethionine decarboxylase alpha chain" evidence="1">
    <location>
        <begin position="112"/>
        <end position="264"/>
    </location>
</feature>
<feature type="active site" description="Schiff-base intermediate with substrate; via pyruvic acid" evidence="1">
    <location>
        <position position="112"/>
    </location>
</feature>
<feature type="active site" description="Proton acceptor; for processing activity" evidence="1">
    <location>
        <position position="117"/>
    </location>
</feature>
<feature type="active site" description="Proton donor; for catalytic activity" evidence="1">
    <location>
        <position position="140"/>
    </location>
</feature>
<feature type="site" description="Cleavage (non-hydrolytic); by autolysis" evidence="1">
    <location>
        <begin position="111"/>
        <end position="112"/>
    </location>
</feature>
<feature type="modified residue" description="Pyruvic acid (Ser); by autocatalysis" evidence="1">
    <location>
        <position position="112"/>
    </location>
</feature>
<proteinExistence type="inferred from homology"/>
<accession>B1JK46</accession>
<protein>
    <recommendedName>
        <fullName evidence="1">S-adenosylmethionine decarboxylase proenzyme</fullName>
        <shortName evidence="1">AdoMetDC</shortName>
        <shortName evidence="1">SAMDC</shortName>
        <ecNumber evidence="1">4.1.1.50</ecNumber>
    </recommendedName>
    <component>
        <recommendedName>
            <fullName evidence="1">S-adenosylmethionine decarboxylase beta chain</fullName>
        </recommendedName>
    </component>
    <component>
        <recommendedName>
            <fullName evidence="1">S-adenosylmethionine decarboxylase alpha chain</fullName>
        </recommendedName>
    </component>
</protein>
<evidence type="ECO:0000255" key="1">
    <source>
        <dbReference type="HAMAP-Rule" id="MF_00465"/>
    </source>
</evidence>
<dbReference type="EC" id="4.1.1.50" evidence="1"/>
<dbReference type="EMBL" id="CP000950">
    <property type="protein sequence ID" value="ACA69750.1"/>
    <property type="molecule type" value="Genomic_DNA"/>
</dbReference>
<dbReference type="RefSeq" id="WP_002209337.1">
    <property type="nucleotide sequence ID" value="NZ_CP009792.1"/>
</dbReference>
<dbReference type="SMR" id="B1JK46"/>
<dbReference type="GeneID" id="57975297"/>
<dbReference type="KEGG" id="ypy:YPK_3483"/>
<dbReference type="PATRIC" id="fig|502800.11.peg.4225"/>
<dbReference type="UniPathway" id="UPA00331">
    <property type="reaction ID" value="UER00451"/>
</dbReference>
<dbReference type="GO" id="GO:0005829">
    <property type="term" value="C:cytosol"/>
    <property type="evidence" value="ECO:0007669"/>
    <property type="project" value="TreeGrafter"/>
</dbReference>
<dbReference type="GO" id="GO:0004014">
    <property type="term" value="F:adenosylmethionine decarboxylase activity"/>
    <property type="evidence" value="ECO:0007669"/>
    <property type="project" value="UniProtKB-UniRule"/>
</dbReference>
<dbReference type="GO" id="GO:0008295">
    <property type="term" value="P:spermidine biosynthetic process"/>
    <property type="evidence" value="ECO:0007669"/>
    <property type="project" value="UniProtKB-UniRule"/>
</dbReference>
<dbReference type="FunFam" id="3.60.90.10:FF:000001">
    <property type="entry name" value="S-adenosylmethionine decarboxylase proenzyme"/>
    <property type="match status" value="1"/>
</dbReference>
<dbReference type="Gene3D" id="3.60.90.10">
    <property type="entry name" value="S-adenosylmethionine decarboxylase"/>
    <property type="match status" value="1"/>
</dbReference>
<dbReference type="HAMAP" id="MF_00465">
    <property type="entry name" value="AdoMetDC_2"/>
    <property type="match status" value="1"/>
</dbReference>
<dbReference type="InterPro" id="IPR003826">
    <property type="entry name" value="AdoMetDC_fam_prok"/>
</dbReference>
<dbReference type="InterPro" id="IPR009165">
    <property type="entry name" value="S-AdoMet_deCO2ase_bac"/>
</dbReference>
<dbReference type="InterPro" id="IPR016067">
    <property type="entry name" value="S-AdoMet_deCO2ase_core"/>
</dbReference>
<dbReference type="NCBIfam" id="TIGR03331">
    <property type="entry name" value="SAM_DCase_Eco"/>
    <property type="match status" value="1"/>
</dbReference>
<dbReference type="PANTHER" id="PTHR33866">
    <property type="entry name" value="S-ADENOSYLMETHIONINE DECARBOXYLASE PROENZYME"/>
    <property type="match status" value="1"/>
</dbReference>
<dbReference type="PANTHER" id="PTHR33866:SF1">
    <property type="entry name" value="S-ADENOSYLMETHIONINE DECARBOXYLASE PROENZYME"/>
    <property type="match status" value="1"/>
</dbReference>
<dbReference type="Pfam" id="PF02675">
    <property type="entry name" value="AdoMet_dc"/>
    <property type="match status" value="1"/>
</dbReference>
<dbReference type="PIRSF" id="PIRSF001356">
    <property type="entry name" value="SAM_decarboxylas"/>
    <property type="match status" value="1"/>
</dbReference>
<dbReference type="SUPFAM" id="SSF56276">
    <property type="entry name" value="S-adenosylmethionine decarboxylase"/>
    <property type="match status" value="1"/>
</dbReference>
<sequence length="264" mass="30293">MSKLKLHGFNNLTKSLSFCIYDICYAKTADDRDGYIAYIDEQYNANRLTEILSETCSIIGANILNIARQDYDPQGASVTILVSEEPVDPRDVDTSEHPGPLPSAVVAHLDKSHICVHTYPESHPEAGLCTFRADIEVSTCGVISPLKALNYLIHQLESDIVTMDYRVRGFTRDINGVKHFIDHKINSIQNFMSDDMKSLYHMMDVNVYQENIFHTKMMLKDFDLKHYLFNAKPEELSAEEKEQITRLLYKEMQEIYYGRNVPEV</sequence>
<comment type="function">
    <text evidence="1">Catalyzes the decarboxylation of S-adenosylmethionine to S-adenosylmethioninamine (dcAdoMet), the propylamine donor required for the synthesis of the polyamines spermine and spermidine from the diamine putrescine.</text>
</comment>
<comment type="catalytic activity">
    <reaction evidence="1">
        <text>S-adenosyl-L-methionine + H(+) = S-adenosyl 3-(methylsulfanyl)propylamine + CO2</text>
        <dbReference type="Rhea" id="RHEA:15981"/>
        <dbReference type="ChEBI" id="CHEBI:15378"/>
        <dbReference type="ChEBI" id="CHEBI:16526"/>
        <dbReference type="ChEBI" id="CHEBI:57443"/>
        <dbReference type="ChEBI" id="CHEBI:59789"/>
        <dbReference type="EC" id="4.1.1.50"/>
    </reaction>
</comment>
<comment type="cofactor">
    <cofactor evidence="1">
        <name>pyruvate</name>
        <dbReference type="ChEBI" id="CHEBI:15361"/>
    </cofactor>
    <text evidence="1">Binds 1 pyruvoyl group covalently per subunit.</text>
</comment>
<comment type="pathway">
    <text evidence="1">Amine and polyamine biosynthesis; S-adenosylmethioninamine biosynthesis; S-adenosylmethioninamine from S-adenosyl-L-methionine: step 1/1.</text>
</comment>
<comment type="subunit">
    <text evidence="1">Heterooctamer of four alpha and four beta chains arranged as a tetramer of alpha/beta heterodimers.</text>
</comment>
<comment type="PTM">
    <text evidence="1">Is synthesized initially as an inactive proenzyme. Formation of the active enzyme involves a self-maturation process in which the active site pyruvoyl group is generated from an internal serine residue via an autocatalytic post-translational modification. Two non-identical subunits are generated from the proenzyme in this reaction, and the pyruvate is formed at the N-terminus of the alpha chain, which is derived from the carboxyl end of the proenzyme. The post-translation cleavage follows an unusual pathway, termed non-hydrolytic serinolysis, in which the side chain hydroxyl group of the serine supplies its oxygen atom to form the C-terminus of the beta chain, while the remainder of the serine residue undergoes an oxidative deamination to produce ammonia and the pyruvoyl group blocking the N-terminus of the alpha chain.</text>
</comment>
<comment type="similarity">
    <text evidence="1">Belongs to the prokaryotic AdoMetDC family. Type 2 subfamily.</text>
</comment>
<organism>
    <name type="scientific">Yersinia pseudotuberculosis serotype O:3 (strain YPIII)</name>
    <dbReference type="NCBI Taxonomy" id="502800"/>
    <lineage>
        <taxon>Bacteria</taxon>
        <taxon>Pseudomonadati</taxon>
        <taxon>Pseudomonadota</taxon>
        <taxon>Gammaproteobacteria</taxon>
        <taxon>Enterobacterales</taxon>
        <taxon>Yersiniaceae</taxon>
        <taxon>Yersinia</taxon>
    </lineage>
</organism>
<keyword id="KW-0068">Autocatalytic cleavage</keyword>
<keyword id="KW-0210">Decarboxylase</keyword>
<keyword id="KW-0456">Lyase</keyword>
<keyword id="KW-0620">Polyamine biosynthesis</keyword>
<keyword id="KW-0670">Pyruvate</keyword>
<keyword id="KW-0949">S-adenosyl-L-methionine</keyword>
<keyword id="KW-0704">Schiff base</keyword>
<keyword id="KW-0745">Spermidine biosynthesis</keyword>
<keyword id="KW-0865">Zymogen</keyword>
<name>SPED_YERPY</name>